<evidence type="ECO:0000255" key="1">
    <source>
        <dbReference type="HAMAP-Rule" id="MF_00145"/>
    </source>
</evidence>
<gene>
    <name evidence="1" type="primary">pgk</name>
    <name type="ordered locus">MAP_1165</name>
</gene>
<keyword id="KW-0067">ATP-binding</keyword>
<keyword id="KW-0963">Cytoplasm</keyword>
<keyword id="KW-0324">Glycolysis</keyword>
<keyword id="KW-0418">Kinase</keyword>
<keyword id="KW-0547">Nucleotide-binding</keyword>
<keyword id="KW-1185">Reference proteome</keyword>
<keyword id="KW-0808">Transferase</keyword>
<feature type="chain" id="PRO_0000145969" description="Phosphoglycerate kinase">
    <location>
        <begin position="1"/>
        <end position="415"/>
    </location>
</feature>
<feature type="binding site" evidence="1">
    <location>
        <begin position="24"/>
        <end position="26"/>
    </location>
    <ligand>
        <name>substrate</name>
    </ligand>
</feature>
<feature type="binding site" evidence="1">
    <location>
        <position position="43"/>
    </location>
    <ligand>
        <name>substrate</name>
    </ligand>
</feature>
<feature type="binding site" evidence="1">
    <location>
        <begin position="66"/>
        <end position="69"/>
    </location>
    <ligand>
        <name>substrate</name>
    </ligand>
</feature>
<feature type="binding site" evidence="1">
    <location>
        <position position="125"/>
    </location>
    <ligand>
        <name>substrate</name>
    </ligand>
</feature>
<feature type="binding site" evidence="1">
    <location>
        <position position="165"/>
    </location>
    <ligand>
        <name>substrate</name>
    </ligand>
</feature>
<feature type="binding site" evidence="1">
    <location>
        <position position="215"/>
    </location>
    <ligand>
        <name>ATP</name>
        <dbReference type="ChEBI" id="CHEBI:30616"/>
    </ligand>
</feature>
<feature type="binding site" evidence="1">
    <location>
        <position position="303"/>
    </location>
    <ligand>
        <name>ATP</name>
        <dbReference type="ChEBI" id="CHEBI:30616"/>
    </ligand>
</feature>
<feature type="binding site" evidence="1">
    <location>
        <position position="334"/>
    </location>
    <ligand>
        <name>ATP</name>
        <dbReference type="ChEBI" id="CHEBI:30616"/>
    </ligand>
</feature>
<feature type="binding site" evidence="1">
    <location>
        <begin position="363"/>
        <end position="366"/>
    </location>
    <ligand>
        <name>ATP</name>
        <dbReference type="ChEBI" id="CHEBI:30616"/>
    </ligand>
</feature>
<name>PGK_MYCPA</name>
<organism>
    <name type="scientific">Mycolicibacterium paratuberculosis (strain ATCC BAA-968 / K-10)</name>
    <name type="common">Mycobacterium paratuberculosis</name>
    <dbReference type="NCBI Taxonomy" id="262316"/>
    <lineage>
        <taxon>Bacteria</taxon>
        <taxon>Bacillati</taxon>
        <taxon>Actinomycetota</taxon>
        <taxon>Actinomycetes</taxon>
        <taxon>Mycobacteriales</taxon>
        <taxon>Mycobacteriaceae</taxon>
        <taxon>Mycobacterium</taxon>
        <taxon>Mycobacterium avium complex (MAC)</taxon>
    </lineage>
</organism>
<comment type="catalytic activity">
    <reaction evidence="1">
        <text>(2R)-3-phosphoglycerate + ATP = (2R)-3-phospho-glyceroyl phosphate + ADP</text>
        <dbReference type="Rhea" id="RHEA:14801"/>
        <dbReference type="ChEBI" id="CHEBI:30616"/>
        <dbReference type="ChEBI" id="CHEBI:57604"/>
        <dbReference type="ChEBI" id="CHEBI:58272"/>
        <dbReference type="ChEBI" id="CHEBI:456216"/>
        <dbReference type="EC" id="2.7.2.3"/>
    </reaction>
</comment>
<comment type="pathway">
    <text evidence="1">Carbohydrate degradation; glycolysis; pyruvate from D-glyceraldehyde 3-phosphate: step 2/5.</text>
</comment>
<comment type="subunit">
    <text evidence="1">Monomer.</text>
</comment>
<comment type="subcellular location">
    <subcellularLocation>
        <location evidence="1">Cytoplasm</location>
    </subcellularLocation>
</comment>
<comment type="similarity">
    <text evidence="1">Belongs to the phosphoglycerate kinase family.</text>
</comment>
<reference key="1">
    <citation type="journal article" date="2005" name="Proc. Natl. Acad. Sci. U.S.A.">
        <title>The complete genome sequence of Mycobacterium avium subspecies paratuberculosis.</title>
        <authorList>
            <person name="Li L."/>
            <person name="Bannantine J.P."/>
            <person name="Zhang Q."/>
            <person name="Amonsin A."/>
            <person name="May B.J."/>
            <person name="Alt D."/>
            <person name="Banerji N."/>
            <person name="Kanjilal S."/>
            <person name="Kapur V."/>
        </authorList>
    </citation>
    <scope>NUCLEOTIDE SEQUENCE [LARGE SCALE GENOMIC DNA]</scope>
    <source>
        <strain>ATCC BAA-968 / K-10</strain>
    </source>
</reference>
<dbReference type="EC" id="2.7.2.3" evidence="1"/>
<dbReference type="EMBL" id="AE016958">
    <property type="protein sequence ID" value="AAS03482.1"/>
    <property type="molecule type" value="Genomic_DNA"/>
</dbReference>
<dbReference type="RefSeq" id="WP_003877645.1">
    <property type="nucleotide sequence ID" value="NZ_CP106873.1"/>
</dbReference>
<dbReference type="SMR" id="P62416"/>
<dbReference type="STRING" id="262316.MAP_1165"/>
<dbReference type="KEGG" id="mpa:MAP_1165"/>
<dbReference type="eggNOG" id="COG0126">
    <property type="taxonomic scope" value="Bacteria"/>
</dbReference>
<dbReference type="HOGENOM" id="CLU_025427_0_2_11"/>
<dbReference type="UniPathway" id="UPA00109">
    <property type="reaction ID" value="UER00185"/>
</dbReference>
<dbReference type="Proteomes" id="UP000000580">
    <property type="component" value="Chromosome"/>
</dbReference>
<dbReference type="GO" id="GO:0005829">
    <property type="term" value="C:cytosol"/>
    <property type="evidence" value="ECO:0007669"/>
    <property type="project" value="TreeGrafter"/>
</dbReference>
<dbReference type="GO" id="GO:0043531">
    <property type="term" value="F:ADP binding"/>
    <property type="evidence" value="ECO:0007669"/>
    <property type="project" value="TreeGrafter"/>
</dbReference>
<dbReference type="GO" id="GO:0005524">
    <property type="term" value="F:ATP binding"/>
    <property type="evidence" value="ECO:0007669"/>
    <property type="project" value="UniProtKB-KW"/>
</dbReference>
<dbReference type="GO" id="GO:0004618">
    <property type="term" value="F:phosphoglycerate kinase activity"/>
    <property type="evidence" value="ECO:0007669"/>
    <property type="project" value="UniProtKB-UniRule"/>
</dbReference>
<dbReference type="GO" id="GO:0006094">
    <property type="term" value="P:gluconeogenesis"/>
    <property type="evidence" value="ECO:0007669"/>
    <property type="project" value="TreeGrafter"/>
</dbReference>
<dbReference type="GO" id="GO:0006096">
    <property type="term" value="P:glycolytic process"/>
    <property type="evidence" value="ECO:0007669"/>
    <property type="project" value="UniProtKB-UniRule"/>
</dbReference>
<dbReference type="CDD" id="cd00318">
    <property type="entry name" value="Phosphoglycerate_kinase"/>
    <property type="match status" value="1"/>
</dbReference>
<dbReference type="FunFam" id="3.40.50.1260:FF:000006">
    <property type="entry name" value="Phosphoglycerate kinase"/>
    <property type="match status" value="1"/>
</dbReference>
<dbReference type="FunFam" id="3.40.50.1260:FF:000031">
    <property type="entry name" value="Phosphoglycerate kinase 1"/>
    <property type="match status" value="1"/>
</dbReference>
<dbReference type="Gene3D" id="3.40.50.1260">
    <property type="entry name" value="Phosphoglycerate kinase, N-terminal domain"/>
    <property type="match status" value="2"/>
</dbReference>
<dbReference type="HAMAP" id="MF_00145">
    <property type="entry name" value="Phosphoglyc_kinase"/>
    <property type="match status" value="1"/>
</dbReference>
<dbReference type="InterPro" id="IPR001576">
    <property type="entry name" value="Phosphoglycerate_kinase"/>
</dbReference>
<dbReference type="InterPro" id="IPR015911">
    <property type="entry name" value="Phosphoglycerate_kinase_CS"/>
</dbReference>
<dbReference type="InterPro" id="IPR015824">
    <property type="entry name" value="Phosphoglycerate_kinase_N"/>
</dbReference>
<dbReference type="InterPro" id="IPR036043">
    <property type="entry name" value="Phosphoglycerate_kinase_sf"/>
</dbReference>
<dbReference type="PANTHER" id="PTHR11406">
    <property type="entry name" value="PHOSPHOGLYCERATE KINASE"/>
    <property type="match status" value="1"/>
</dbReference>
<dbReference type="PANTHER" id="PTHR11406:SF23">
    <property type="entry name" value="PHOSPHOGLYCERATE KINASE 1, CHLOROPLASTIC-RELATED"/>
    <property type="match status" value="1"/>
</dbReference>
<dbReference type="Pfam" id="PF00162">
    <property type="entry name" value="PGK"/>
    <property type="match status" value="1"/>
</dbReference>
<dbReference type="PIRSF" id="PIRSF000724">
    <property type="entry name" value="Pgk"/>
    <property type="match status" value="1"/>
</dbReference>
<dbReference type="PRINTS" id="PR00477">
    <property type="entry name" value="PHGLYCKINASE"/>
</dbReference>
<dbReference type="SUPFAM" id="SSF53748">
    <property type="entry name" value="Phosphoglycerate kinase"/>
    <property type="match status" value="1"/>
</dbReference>
<dbReference type="PROSITE" id="PS00111">
    <property type="entry name" value="PGLYCERATE_KINASE"/>
    <property type="match status" value="1"/>
</dbReference>
<accession>P62416</accession>
<sequence length="415" mass="42437">MAVHNLKDLLAEGVSGRGVLVRSDLNVPLDSDGEQGRITDPGRITASVPTLSALVEAGAKVVVAAHLGRPKNGPDPALSLAPVAAALGEQLGRHVQLASDVVGTDALARAEGLTDGDVLLLENIRFDARETSKDDAERLALARQLAELVGPTGAFVSDGFGVVHRKQASVYDVATLLPHYAGTLVAEEIAVLEQLTGSTKRPYAVVLGGSKVSDKLGVIESLATKADSIVIGGGMCFTFLAAQGFSVGKSLLETEMVDTCRRLLDTYVDVLRLPVDIVAADRFAADAAPQTVPADAIPDDLMGLDIGPGSVKRFTALLSNAETIFWNGPMGVFEFPAFAAGTKGLAEAIAAATGKGAFSVVGGGDSAAAVRALGIPESGFSHISTGGGASLEYLEGKALPGIEVLGRPQPTGGAA</sequence>
<proteinExistence type="inferred from homology"/>
<protein>
    <recommendedName>
        <fullName evidence="1">Phosphoglycerate kinase</fullName>
        <ecNumber evidence="1">2.7.2.3</ecNumber>
    </recommendedName>
</protein>